<keyword id="KW-0204">Cytolysis</keyword>
<keyword id="KW-1061">Dermonecrotic toxin</keyword>
<keyword id="KW-1015">Disulfide bond</keyword>
<keyword id="KW-0354">Hemolysis</keyword>
<keyword id="KW-0442">Lipid degradation</keyword>
<keyword id="KW-0443">Lipid metabolism</keyword>
<keyword id="KW-0456">Lyase</keyword>
<keyword id="KW-0460">Magnesium</keyword>
<keyword id="KW-0479">Metal-binding</keyword>
<keyword id="KW-0964">Secreted</keyword>
<keyword id="KW-0800">Toxin</keyword>
<dbReference type="EC" id="4.6.1.-" evidence="4"/>
<dbReference type="EMBL" id="FJ171459">
    <property type="protein sequence ID" value="ACN48955.1"/>
    <property type="molecule type" value="mRNA"/>
</dbReference>
<dbReference type="SMR" id="C0JB24"/>
<dbReference type="GO" id="GO:0005576">
    <property type="term" value="C:extracellular region"/>
    <property type="evidence" value="ECO:0007669"/>
    <property type="project" value="UniProtKB-SubCell"/>
</dbReference>
<dbReference type="GO" id="GO:0016829">
    <property type="term" value="F:lyase activity"/>
    <property type="evidence" value="ECO:0007669"/>
    <property type="project" value="UniProtKB-KW"/>
</dbReference>
<dbReference type="GO" id="GO:0046872">
    <property type="term" value="F:metal ion binding"/>
    <property type="evidence" value="ECO:0007669"/>
    <property type="project" value="UniProtKB-KW"/>
</dbReference>
<dbReference type="GO" id="GO:0008081">
    <property type="term" value="F:phosphoric diester hydrolase activity"/>
    <property type="evidence" value="ECO:0007669"/>
    <property type="project" value="InterPro"/>
</dbReference>
<dbReference type="GO" id="GO:0090729">
    <property type="term" value="F:toxin activity"/>
    <property type="evidence" value="ECO:0007669"/>
    <property type="project" value="UniProtKB-KW"/>
</dbReference>
<dbReference type="GO" id="GO:0031640">
    <property type="term" value="P:killing of cells of another organism"/>
    <property type="evidence" value="ECO:0007669"/>
    <property type="project" value="UniProtKB-KW"/>
</dbReference>
<dbReference type="GO" id="GO:0016042">
    <property type="term" value="P:lipid catabolic process"/>
    <property type="evidence" value="ECO:0007669"/>
    <property type="project" value="UniProtKB-KW"/>
</dbReference>
<dbReference type="CDD" id="cd08576">
    <property type="entry name" value="GDPD_like_SMaseD_PLD"/>
    <property type="match status" value="1"/>
</dbReference>
<dbReference type="Gene3D" id="3.20.20.190">
    <property type="entry name" value="Phosphatidylinositol (PI) phosphodiesterase"/>
    <property type="match status" value="1"/>
</dbReference>
<dbReference type="InterPro" id="IPR017946">
    <property type="entry name" value="PLC-like_Pdiesterase_TIM-brl"/>
</dbReference>
<dbReference type="SUPFAM" id="SSF51695">
    <property type="entry name" value="PLC-like phosphodiesterases"/>
    <property type="match status" value="1"/>
</dbReference>
<proteinExistence type="evidence at transcript level"/>
<evidence type="ECO:0000250" key="1">
    <source>
        <dbReference type="UniProtKB" id="A0A0D4WTV1"/>
    </source>
</evidence>
<evidence type="ECO:0000250" key="2">
    <source>
        <dbReference type="UniProtKB" id="A0A0D4WV12"/>
    </source>
</evidence>
<evidence type="ECO:0000250" key="3">
    <source>
        <dbReference type="UniProtKB" id="P0CE80"/>
    </source>
</evidence>
<evidence type="ECO:0000250" key="4">
    <source>
        <dbReference type="UniProtKB" id="Q4ZFU2"/>
    </source>
</evidence>
<evidence type="ECO:0000250" key="5">
    <source>
        <dbReference type="UniProtKB" id="Q8I914"/>
    </source>
</evidence>
<evidence type="ECO:0000303" key="6">
    <source>
    </source>
</evidence>
<evidence type="ECO:0000305" key="7"/>
<evidence type="ECO:0000305" key="8">
    <source>
    </source>
</evidence>
<organism>
    <name type="scientific">Loxosceles laeta</name>
    <name type="common">South American recluse spider</name>
    <name type="synonym">Scytodes laeta</name>
    <dbReference type="NCBI Taxonomy" id="58217"/>
    <lineage>
        <taxon>Eukaryota</taxon>
        <taxon>Metazoa</taxon>
        <taxon>Ecdysozoa</taxon>
        <taxon>Arthropoda</taxon>
        <taxon>Chelicerata</taxon>
        <taxon>Arachnida</taxon>
        <taxon>Araneae</taxon>
        <taxon>Araneomorphae</taxon>
        <taxon>Haplogynae</taxon>
        <taxon>Scytodoidea</taxon>
        <taxon>Sicariidae</taxon>
        <taxon>Loxosceles</taxon>
    </lineage>
</organism>
<feature type="chain" id="PRO_0000392834" description="Dermonecrotic toxin LlSicTox-alphaIV1ii">
    <location>
        <begin position="1" status="less than"/>
        <end position="276"/>
    </location>
</feature>
<feature type="active site" evidence="5">
    <location>
        <position position="5"/>
    </location>
</feature>
<feature type="active site" description="Nucleophile" evidence="5">
    <location>
        <position position="41"/>
    </location>
</feature>
<feature type="binding site" evidence="5">
    <location>
        <position position="25"/>
    </location>
    <ligand>
        <name>Mg(2+)</name>
        <dbReference type="ChEBI" id="CHEBI:18420"/>
    </ligand>
</feature>
<feature type="binding site" evidence="5">
    <location>
        <position position="27"/>
    </location>
    <ligand>
        <name>Mg(2+)</name>
        <dbReference type="ChEBI" id="CHEBI:18420"/>
    </ligand>
</feature>
<feature type="binding site" evidence="5">
    <location>
        <position position="85"/>
    </location>
    <ligand>
        <name>Mg(2+)</name>
        <dbReference type="ChEBI" id="CHEBI:18420"/>
    </ligand>
</feature>
<feature type="disulfide bond" evidence="3">
    <location>
        <begin position="45"/>
        <end position="51"/>
    </location>
</feature>
<feature type="disulfide bond" evidence="3">
    <location>
        <begin position="47"/>
        <end position="193"/>
    </location>
</feature>
<feature type="non-terminal residue">
    <location>
        <position position="1"/>
    </location>
</feature>
<reference key="1">
    <citation type="journal article" date="2009" name="Mol. Biol. Evol.">
        <title>Molecular evolution, functional variation, and proposed nomenclature of the gene family that includes sphingomyelinase D in sicariid spider venoms.</title>
        <authorList>
            <person name="Binford G.J."/>
            <person name="Bodner M.R."/>
            <person name="Cordes M.H."/>
            <person name="Baldwin K.L."/>
            <person name="Rynerson M.R."/>
            <person name="Burns S.N."/>
            <person name="Zobel-Thropp P.A."/>
        </authorList>
    </citation>
    <scope>NUCLEOTIDE SEQUENCE [MRNA]</scope>
    <scope>NOMENCLATURE</scope>
    <source>
        <tissue>Venom gland</tissue>
    </source>
</reference>
<accession>C0JB24</accession>
<sequence>WIMGHMVNKIEQINEFLDLGANSIEVDITFDNLGYAEYTYHGFPCDCKRWCTNQENVKEYLNALSDITTPGNPKFRKEQTLVVFDLKTGGIDANRMYEGGKDFAGKILFDYWKGSENAGRAYIIISVPSIDHYKFMKGFRERFDGSAFKDLLLEKVGWDFSGNDDLDATRTAYQNAGIEALNHIWQSDGITNCIPRGLGRVNKAVSNRDSSDAFINKVYVWTVEKYSSVKDALSADVDGIMTNHPNVINGVLKEDEFKDRFKLATYEDNPWTTFKR</sequence>
<comment type="function">
    <text evidence="1 3">Dermonecrotic toxins cleave the phosphodiester linkage between the phosphate and headgroup of certain phospholipids (sphingolipid and lysolipid substrates), forming an alcohol (often choline) and a cyclic phosphate (By similarity). This toxin acts on sphingomyelin (SM) (By similarity). It may also act on ceramide phosphoethanolamine (CPE), lysophosphatidylcholine (LPC) and lysophosphatidylethanolamine (LPE), but not on lysophosphatidylserine (LPS), and lysophosphatidylglycerol (LPG) (By similarity). It acts by transphosphatidylation, releasing exclusively cyclic phosphate products as second products (By similarity). Induces dermonecrosis, hemolysis, increased vascular permeability, edema, inflammatory response, and platelet aggregation (By similarity).</text>
</comment>
<comment type="catalytic activity">
    <reaction evidence="1">
        <text>an N-(acyl)-sphingosylphosphocholine = an N-(acyl)-sphingosyl-1,3-cyclic phosphate + choline</text>
        <dbReference type="Rhea" id="RHEA:60652"/>
        <dbReference type="ChEBI" id="CHEBI:15354"/>
        <dbReference type="ChEBI" id="CHEBI:64583"/>
        <dbReference type="ChEBI" id="CHEBI:143892"/>
    </reaction>
</comment>
<comment type="catalytic activity">
    <reaction evidence="1">
        <text>an N-(acyl)-sphingosylphosphoethanolamine = an N-(acyl)-sphingosyl-1,3-cyclic phosphate + ethanolamine</text>
        <dbReference type="Rhea" id="RHEA:60648"/>
        <dbReference type="ChEBI" id="CHEBI:57603"/>
        <dbReference type="ChEBI" id="CHEBI:143891"/>
        <dbReference type="ChEBI" id="CHEBI:143892"/>
    </reaction>
</comment>
<comment type="catalytic activity">
    <reaction evidence="1">
        <text>a 1-acyl-sn-glycero-3-phosphocholine = a 1-acyl-sn-glycero-2,3-cyclic phosphate + choline</text>
        <dbReference type="Rhea" id="RHEA:60700"/>
        <dbReference type="ChEBI" id="CHEBI:15354"/>
        <dbReference type="ChEBI" id="CHEBI:58168"/>
        <dbReference type="ChEBI" id="CHEBI:143947"/>
    </reaction>
</comment>
<comment type="catalytic activity">
    <reaction evidence="1">
        <text>a 1-acyl-sn-glycero-3-phosphoethanolamine = a 1-acyl-sn-glycero-2,3-cyclic phosphate + ethanolamine</text>
        <dbReference type="Rhea" id="RHEA:60704"/>
        <dbReference type="ChEBI" id="CHEBI:57603"/>
        <dbReference type="ChEBI" id="CHEBI:64381"/>
        <dbReference type="ChEBI" id="CHEBI:143947"/>
    </reaction>
</comment>
<comment type="cofactor">
    <cofactor evidence="5">
        <name>Mg(2+)</name>
        <dbReference type="ChEBI" id="CHEBI:18420"/>
    </cofactor>
    <text evidence="5">Binds 1 Mg(2+) ion per subunit.</text>
</comment>
<comment type="subcellular location">
    <subcellularLocation>
        <location evidence="8">Secreted</location>
    </subcellularLocation>
</comment>
<comment type="tissue specificity">
    <text evidence="8">Expressed by the venom gland.</text>
</comment>
<comment type="similarity">
    <text evidence="7">Belongs to the arthropod phospholipase D family. Class II subfamily.</text>
</comment>
<comment type="caution">
    <text evidence="1 2 4">The most common activity assay for dermonecrotic toxins detects enzymatic activity by monitoring choline release from substrate. Liberation of choline from sphingomyelin (SM) or lysophosphatidylcholine (LPC) is commonly assumed to result from substrate hydrolysis, giving either ceramide-1-phosphate (C1P) or lysophosphatidic acid (LPA), respectively, as a second product. However, two studies from Lajoie and colleagues (2013 and 2015) report the observation of exclusive formation of cyclic phosphate products as second products, resulting from intramolecular transphosphatidylation. Cyclic phosphates have vastly different biological properties from their monoester counterparts, and they may be relevant to the pathology of brown spider envenomation.</text>
</comment>
<name>A412_LOXLA</name>
<protein>
    <recommendedName>
        <fullName evidence="6">Dermonecrotic toxin LlSicTox-alphaIV1ii</fullName>
        <ecNumber evidence="4">4.6.1.-</ecNumber>
    </recommendedName>
    <alternativeName>
        <fullName>Phospholipase D</fullName>
        <shortName>PLD</shortName>
    </alternativeName>
    <alternativeName>
        <fullName>Sphingomyelin phosphodiesterase D</fullName>
        <shortName>SMD</shortName>
        <shortName>SMase D</shortName>
        <shortName>Sphingomyelinase D</shortName>
    </alternativeName>
</protein>